<reference key="1">
    <citation type="journal article" date="2000" name="Nature">
        <title>Complete genome sequence of Pseudomonas aeruginosa PAO1, an opportunistic pathogen.</title>
        <authorList>
            <person name="Stover C.K."/>
            <person name="Pham X.-Q.T."/>
            <person name="Erwin A.L."/>
            <person name="Mizoguchi S.D."/>
            <person name="Warrener P."/>
            <person name="Hickey M.J."/>
            <person name="Brinkman F.S.L."/>
            <person name="Hufnagle W.O."/>
            <person name="Kowalik D.J."/>
            <person name="Lagrou M."/>
            <person name="Garber R.L."/>
            <person name="Goltry L."/>
            <person name="Tolentino E."/>
            <person name="Westbrock-Wadman S."/>
            <person name="Yuan Y."/>
            <person name="Brody L.L."/>
            <person name="Coulter S.N."/>
            <person name="Folger K.R."/>
            <person name="Kas A."/>
            <person name="Larbig K."/>
            <person name="Lim R.M."/>
            <person name="Smith K.A."/>
            <person name="Spencer D.H."/>
            <person name="Wong G.K.-S."/>
            <person name="Wu Z."/>
            <person name="Paulsen I.T."/>
            <person name="Reizer J."/>
            <person name="Saier M.H. Jr."/>
            <person name="Hancock R.E.W."/>
            <person name="Lory S."/>
            <person name="Olson M.V."/>
        </authorList>
    </citation>
    <scope>NUCLEOTIDE SEQUENCE [LARGE SCALE GENOMIC DNA]</scope>
    <source>
        <strain>ATCC 15692 / DSM 22644 / CIP 104116 / JCM 14847 / LMG 12228 / 1C / PRS 101 / PAO1</strain>
    </source>
</reference>
<keyword id="KW-1185">Reference proteome</keyword>
<name>SFSA_PSEAE</name>
<comment type="similarity">
    <text evidence="1">Belongs to the SfsA family.</text>
</comment>
<protein>
    <recommendedName>
        <fullName evidence="1">Sugar fermentation stimulation protein homolog</fullName>
    </recommendedName>
</protein>
<sequence length="235" mass="25822">MRFEQPLEEGRLLRRYKRFLADIESAGGERLTIHCPNTGSMLNCMSEGCRVWFSRSNDPKRKLPGTWELSETPQGRLACVNTARANRLVEEALLAGDIAELAGFTALRREVAYGVENSRADFRLEYPTGALFIEVKSVTLGFDETAVAAFPDAVTLRGAKHLRELAALAREGIRAVQLYCVNLSGVEAVRPADEIDPAYGKALREAAQAGVEVLAYGAEVTTEGLNLARRLPVRL</sequence>
<proteinExistence type="inferred from homology"/>
<dbReference type="EMBL" id="AE004091">
    <property type="protein sequence ID" value="AAG08107.1"/>
    <property type="molecule type" value="Genomic_DNA"/>
</dbReference>
<dbReference type="PIR" id="C83057">
    <property type="entry name" value="C83057"/>
</dbReference>
<dbReference type="RefSeq" id="NP_253409.1">
    <property type="nucleotide sequence ID" value="NC_002516.2"/>
</dbReference>
<dbReference type="RefSeq" id="WP_003113458.1">
    <property type="nucleotide sequence ID" value="NZ_QZGE01000018.1"/>
</dbReference>
<dbReference type="SMR" id="Q9HV77"/>
<dbReference type="FunCoup" id="Q9HV77">
    <property type="interactions" value="25"/>
</dbReference>
<dbReference type="STRING" id="208964.PA4721"/>
<dbReference type="PaxDb" id="208964-PA4721"/>
<dbReference type="DNASU" id="881588"/>
<dbReference type="GeneID" id="881588"/>
<dbReference type="KEGG" id="pae:PA4721"/>
<dbReference type="PATRIC" id="fig|208964.12.peg.4945"/>
<dbReference type="PseudoCAP" id="PA4721"/>
<dbReference type="HOGENOM" id="CLU_052299_2_0_6"/>
<dbReference type="InParanoid" id="Q9HV77"/>
<dbReference type="OrthoDB" id="9802365at2"/>
<dbReference type="PhylomeDB" id="Q9HV77"/>
<dbReference type="BioCyc" id="PAER208964:G1FZ6-4827-MONOMER"/>
<dbReference type="Proteomes" id="UP000002438">
    <property type="component" value="Chromosome"/>
</dbReference>
<dbReference type="GO" id="GO:0003677">
    <property type="term" value="F:DNA binding"/>
    <property type="evidence" value="ECO:0000318"/>
    <property type="project" value="GO_Central"/>
</dbReference>
<dbReference type="CDD" id="cd22359">
    <property type="entry name" value="SfsA-like_bacterial"/>
    <property type="match status" value="1"/>
</dbReference>
<dbReference type="FunFam" id="2.40.50.580:FF:000001">
    <property type="entry name" value="Sugar fermentation stimulation protein A"/>
    <property type="match status" value="1"/>
</dbReference>
<dbReference type="FunFam" id="3.40.1350.60:FF:000001">
    <property type="entry name" value="Sugar fermentation stimulation protein A"/>
    <property type="match status" value="1"/>
</dbReference>
<dbReference type="Gene3D" id="2.40.50.580">
    <property type="match status" value="1"/>
</dbReference>
<dbReference type="Gene3D" id="3.40.1350.60">
    <property type="match status" value="1"/>
</dbReference>
<dbReference type="HAMAP" id="MF_00095">
    <property type="entry name" value="SfsA"/>
    <property type="match status" value="1"/>
</dbReference>
<dbReference type="InterPro" id="IPR005224">
    <property type="entry name" value="SfsA"/>
</dbReference>
<dbReference type="InterPro" id="IPR040452">
    <property type="entry name" value="SfsA_C"/>
</dbReference>
<dbReference type="InterPro" id="IPR041465">
    <property type="entry name" value="SfsA_N"/>
</dbReference>
<dbReference type="NCBIfam" id="TIGR00230">
    <property type="entry name" value="sfsA"/>
    <property type="match status" value="1"/>
</dbReference>
<dbReference type="PANTHER" id="PTHR30545">
    <property type="entry name" value="SUGAR FERMENTATION STIMULATION PROTEIN A"/>
    <property type="match status" value="1"/>
</dbReference>
<dbReference type="PANTHER" id="PTHR30545:SF2">
    <property type="entry name" value="SUGAR FERMENTATION STIMULATION PROTEIN A"/>
    <property type="match status" value="1"/>
</dbReference>
<dbReference type="Pfam" id="PF03749">
    <property type="entry name" value="SfsA"/>
    <property type="match status" value="1"/>
</dbReference>
<dbReference type="Pfam" id="PF17746">
    <property type="entry name" value="SfsA_N"/>
    <property type="match status" value="1"/>
</dbReference>
<evidence type="ECO:0000255" key="1">
    <source>
        <dbReference type="HAMAP-Rule" id="MF_00095"/>
    </source>
</evidence>
<organism>
    <name type="scientific">Pseudomonas aeruginosa (strain ATCC 15692 / DSM 22644 / CIP 104116 / JCM 14847 / LMG 12228 / 1C / PRS 101 / PAO1)</name>
    <dbReference type="NCBI Taxonomy" id="208964"/>
    <lineage>
        <taxon>Bacteria</taxon>
        <taxon>Pseudomonadati</taxon>
        <taxon>Pseudomonadota</taxon>
        <taxon>Gammaproteobacteria</taxon>
        <taxon>Pseudomonadales</taxon>
        <taxon>Pseudomonadaceae</taxon>
        <taxon>Pseudomonas</taxon>
    </lineage>
</organism>
<feature type="chain" id="PRO_0000152298" description="Sugar fermentation stimulation protein homolog">
    <location>
        <begin position="1"/>
        <end position="235"/>
    </location>
</feature>
<gene>
    <name evidence="1" type="primary">sfsA</name>
    <name type="ordered locus">PA4721</name>
</gene>
<accession>Q9HV77</accession>